<comment type="function">
    <text evidence="1">Plays a role in the inhibition of host innate immunity by inducing the degradation of key host factors required to activate interferon production such as IRF3, IRF5 or IRF7. Associates with components of cullin RING ligases (CRLs) including CUL1 or CUL3, which are essential multisubunit ubiquitination complexes, to modulate their activities. Recognizes the host NF-kappa-B regulator BTRC through the presence of a DSGXS motif in the C-terminal substrate recognition domain.</text>
</comment>
<comment type="subunit">
    <text evidence="1">Interacts (via C-terminus) with host IRF3; this interaction leads to IRF3 degradation. Interacts with host IRF7; this interaction leads to IRF7 degradation. Interacts with host CUL1 and CUL3. Interacts with host BTRC.</text>
</comment>
<comment type="subcellular location">
    <subcellularLocation>
        <location evidence="1">Host cytoplasm</location>
        <location evidence="1">Host cytoskeleton</location>
    </subcellularLocation>
</comment>
<comment type="domain">
    <text evidence="1">The integrity of the zinc-binding domain in NSP1 is important for degradation of host IRF3.</text>
</comment>
<comment type="domain">
    <text evidence="1">The pLxIS motif targets host IRF3 for degradation; however phosphorylation of NSP1 pLxIS motif is not required for its activity.</text>
</comment>
<comment type="PTM">
    <text evidence="1">The C-terminal region is phosphorylated by host CKII/CSNK2A1. Phosphorylation of the DSGXS motif is essential for host NF-kappa-B inhibition.</text>
</comment>
<comment type="similarity">
    <text evidence="1">Belongs to the rotavirus NSP1 family.</text>
</comment>
<sequence>MATFKDACYYYKRINKLNHAVLKLGVNDTWRPSPPTKYKGWCLDCCQHTDLTYCRGCTMYHVCQWCSQYGRCFLDDEPHLLRMRTFKNEITKDDLKNLIDMYSTLFPMNQKIVCKFINNTKQHKCRNECMTQWYNHLLMPITLQSLSIELDGDVYYVFGYYDNMNSVNQTPFSFTNLIDMYDKLLLDDVNFVRMSFLPTSLQQEYAIRYFSKSRFISEQRKCVNDSHFSINVLENLHNPSFKVQITRNCSELLLGWNEACKLVKNVSAYFDMLKTSRIEFYSVSTRCRIFTQHKLKMASKLIKPNYITSNHRTSATEVHNCKWCSVNNSYTVWNDFRVKKIYDNIFSFLRALVKSNVNIGHRSSQEKIYEYVEDVLNVCDNEKWKTSIMKVFNCLEPVELDNVKYVLFNHEINWDVINVLVQSIGKVPQILTLKNVITIIQSIIYEWFDIRYMRNTPMVTFTIDKLRRLHTELKTAEYDSGISDVE</sequence>
<proteinExistence type="inferred from homology"/>
<evidence type="ECO:0000255" key="1">
    <source>
        <dbReference type="HAMAP-Rule" id="MF_04088"/>
    </source>
</evidence>
<reference key="1">
    <citation type="journal article" date="1993" name="Virology">
        <title>Comparative analysis of the rotavirus NS53 gene: conservation of basic and cysteine-rich regions in the protein and possible stem-loop structures in the RNA.</title>
        <authorList>
            <person name="Hua J.J."/>
            <person name="Mansell E.E."/>
            <person name="Patton J.T."/>
        </authorList>
    </citation>
    <scope>NUCLEOTIDE SEQUENCE</scope>
</reference>
<keyword id="KW-1035">Host cytoplasm</keyword>
<keyword id="KW-1037">Host cytoskeleton</keyword>
<keyword id="KW-0945">Host-virus interaction</keyword>
<keyword id="KW-1090">Inhibition of host innate immune response by virus</keyword>
<keyword id="KW-1092">Inhibition of host IRF3 by virus</keyword>
<keyword id="KW-1093">Inhibition of host IRF7 by virus</keyword>
<keyword id="KW-1100">Inhibition of host NF-kappa-B by virus</keyword>
<keyword id="KW-1113">Inhibition of host RLR pathway by virus</keyword>
<keyword id="KW-0922">Interferon antiviral system evasion</keyword>
<keyword id="KW-0479">Metal-binding</keyword>
<keyword id="KW-0597">Phosphoprotein</keyword>
<keyword id="KW-0694">RNA-binding</keyword>
<keyword id="KW-0899">Viral immunoevasion</keyword>
<organism>
    <name type="scientific">Rotavirus A (strain RVA/Human/United States/Wa/1974/G1P1A[8])</name>
    <name type="common">RV-A</name>
    <dbReference type="NCBI Taxonomy" id="10962"/>
    <lineage>
        <taxon>Viruses</taxon>
        <taxon>Riboviria</taxon>
        <taxon>Orthornavirae</taxon>
        <taxon>Duplornaviricota</taxon>
        <taxon>Resentoviricetes</taxon>
        <taxon>Reovirales</taxon>
        <taxon>Sedoreoviridae</taxon>
        <taxon>Rotavirus</taxon>
        <taxon>Rotavirus A</taxon>
    </lineage>
</organism>
<dbReference type="EMBL" id="L18943">
    <property type="protein sequence ID" value="AAA02910.1"/>
    <property type="molecule type" value="Unassigned_DNA"/>
</dbReference>
<dbReference type="Proteomes" id="UP000006581">
    <property type="component" value="Genome"/>
</dbReference>
<dbReference type="GO" id="GO:0030430">
    <property type="term" value="C:host cell cytoplasm"/>
    <property type="evidence" value="ECO:0007669"/>
    <property type="project" value="UniProtKB-UniRule"/>
</dbReference>
<dbReference type="GO" id="GO:0044163">
    <property type="term" value="C:host cytoskeleton"/>
    <property type="evidence" value="ECO:0007669"/>
    <property type="project" value="UniProtKB-SubCell"/>
</dbReference>
<dbReference type="GO" id="GO:0046872">
    <property type="term" value="F:metal ion binding"/>
    <property type="evidence" value="ECO:0007669"/>
    <property type="project" value="UniProtKB-UniRule"/>
</dbReference>
<dbReference type="GO" id="GO:0003723">
    <property type="term" value="F:RNA binding"/>
    <property type="evidence" value="ECO:0007669"/>
    <property type="project" value="UniProtKB-UniRule"/>
</dbReference>
<dbReference type="GO" id="GO:0039548">
    <property type="term" value="P:symbiont-mediated suppression of host cytoplasmic pattern recognition receptor signaling pathway via inhibition of IRF3 activity"/>
    <property type="evidence" value="ECO:0007669"/>
    <property type="project" value="UniProtKB-UniRule"/>
</dbReference>
<dbReference type="GO" id="GO:0039557">
    <property type="term" value="P:symbiont-mediated suppression of host cytoplasmic pattern recognition receptor signaling pathway via inhibition of IRF7 activity"/>
    <property type="evidence" value="ECO:0007669"/>
    <property type="project" value="UniProtKB-UniRule"/>
</dbReference>
<dbReference type="GO" id="GO:0085034">
    <property type="term" value="P:symbiont-mediated suppression of host NF-kappaB cascade"/>
    <property type="evidence" value="ECO:0007669"/>
    <property type="project" value="UniProtKB-UniRule"/>
</dbReference>
<dbReference type="HAMAP" id="MF_04088">
    <property type="entry name" value="ROTA_NSP1"/>
    <property type="match status" value="1"/>
</dbReference>
<dbReference type="InterPro" id="IPR002148">
    <property type="entry name" value="Rotavirus_NSP1"/>
</dbReference>
<dbReference type="Pfam" id="PF00981">
    <property type="entry name" value="Rota_NS53"/>
    <property type="match status" value="1"/>
</dbReference>
<feature type="chain" id="PRO_0000149557" description="Non-structural protein 1">
    <location>
        <begin position="1"/>
        <end position="486"/>
    </location>
</feature>
<feature type="region of interest" description="RNA-binding" evidence="1">
    <location>
        <begin position="1"/>
        <end position="81"/>
    </location>
</feature>
<feature type="region of interest" description="Zinc-binding domain" evidence="1">
    <location>
        <begin position="42"/>
        <end position="79"/>
    </location>
</feature>
<feature type="region of interest" description="Important for cytoskeleton localization" evidence="1">
    <location>
        <begin position="82"/>
        <end position="176"/>
    </location>
</feature>
<feature type="region of interest" description="Interaction with host IRF3" evidence="1">
    <location>
        <begin position="317"/>
        <end position="486"/>
    </location>
</feature>
<feature type="short sequence motif" description="IKBKB-like degron (ILD) motif" evidence="1">
    <location>
        <begin position="479"/>
        <end position="483"/>
    </location>
</feature>
<feature type="short sequence motif" description="pLxIS motif" evidence="1">
    <location>
        <begin position="480"/>
        <end position="483"/>
    </location>
</feature>
<name>NSP1_ROTHW</name>
<accession>P35424</accession>
<organismHost>
    <name type="scientific">Homo sapiens</name>
    <name type="common">Human</name>
    <dbReference type="NCBI Taxonomy" id="9606"/>
</organismHost>
<protein>
    <recommendedName>
        <fullName evidence="1">Non-structural protein 1</fullName>
        <shortName evidence="1">NSP1</shortName>
    </recommendedName>
    <alternativeName>
        <fullName evidence="1">NCVP2</fullName>
    </alternativeName>
    <alternativeName>
        <fullName evidence="1">Non-structural RNA-binding protein 53</fullName>
        <shortName evidence="1">NS53</shortName>
    </alternativeName>
</protein>